<organism>
    <name type="scientific">Bradyrhizobium sp. (strain BTAi1 / ATCC BAA-1182)</name>
    <dbReference type="NCBI Taxonomy" id="288000"/>
    <lineage>
        <taxon>Bacteria</taxon>
        <taxon>Pseudomonadati</taxon>
        <taxon>Pseudomonadota</taxon>
        <taxon>Alphaproteobacteria</taxon>
        <taxon>Hyphomicrobiales</taxon>
        <taxon>Nitrobacteraceae</taxon>
        <taxon>Bradyrhizobium</taxon>
    </lineage>
</organism>
<comment type="catalytic activity">
    <reaction evidence="1">
        <text>beta-D-fructose 1,6-bisphosphate + H2O = beta-D-fructose 6-phosphate + phosphate</text>
        <dbReference type="Rhea" id="RHEA:11064"/>
        <dbReference type="ChEBI" id="CHEBI:15377"/>
        <dbReference type="ChEBI" id="CHEBI:32966"/>
        <dbReference type="ChEBI" id="CHEBI:43474"/>
        <dbReference type="ChEBI" id="CHEBI:57634"/>
        <dbReference type="EC" id="3.1.3.11"/>
    </reaction>
</comment>
<comment type="cofactor">
    <cofactor evidence="1">
        <name>Mg(2+)</name>
        <dbReference type="ChEBI" id="CHEBI:18420"/>
    </cofactor>
    <text evidence="1">Binds 2 magnesium ions per subunit.</text>
</comment>
<comment type="pathway">
    <text evidence="1">Carbohydrate biosynthesis; Calvin cycle.</text>
</comment>
<comment type="subunit">
    <text evidence="1">Homotetramer.</text>
</comment>
<comment type="subcellular location">
    <subcellularLocation>
        <location evidence="1">Cytoplasm</location>
    </subcellularLocation>
</comment>
<comment type="similarity">
    <text evidence="1">Belongs to the FBPase class 1 family.</text>
</comment>
<protein>
    <recommendedName>
        <fullName evidence="1">Fructose-1,6-bisphosphatase class 1 1</fullName>
        <shortName evidence="1">FBPase class 1 1</shortName>
        <ecNumber evidence="1">3.1.3.11</ecNumber>
    </recommendedName>
    <alternativeName>
        <fullName evidence="1">D-fructose-1,6-bisphosphate 1-phosphohydrolase class 1 1</fullName>
    </alternativeName>
</protein>
<dbReference type="EC" id="3.1.3.11" evidence="1"/>
<dbReference type="EMBL" id="CP000494">
    <property type="protein sequence ID" value="ABQ32731.1"/>
    <property type="molecule type" value="Genomic_DNA"/>
</dbReference>
<dbReference type="SMR" id="A5E987"/>
<dbReference type="STRING" id="288000.BBta_0445"/>
<dbReference type="KEGG" id="bbt:BBta_0445"/>
<dbReference type="eggNOG" id="COG0158">
    <property type="taxonomic scope" value="Bacteria"/>
</dbReference>
<dbReference type="HOGENOM" id="CLU_039977_0_0_5"/>
<dbReference type="OrthoDB" id="9806756at2"/>
<dbReference type="UniPathway" id="UPA00116"/>
<dbReference type="Proteomes" id="UP000000246">
    <property type="component" value="Chromosome"/>
</dbReference>
<dbReference type="GO" id="GO:0005829">
    <property type="term" value="C:cytosol"/>
    <property type="evidence" value="ECO:0007669"/>
    <property type="project" value="TreeGrafter"/>
</dbReference>
<dbReference type="GO" id="GO:0042132">
    <property type="term" value="F:fructose 1,6-bisphosphate 1-phosphatase activity"/>
    <property type="evidence" value="ECO:0007669"/>
    <property type="project" value="UniProtKB-UniRule"/>
</dbReference>
<dbReference type="GO" id="GO:0000287">
    <property type="term" value="F:magnesium ion binding"/>
    <property type="evidence" value="ECO:0007669"/>
    <property type="project" value="UniProtKB-UniRule"/>
</dbReference>
<dbReference type="GO" id="GO:0030388">
    <property type="term" value="P:fructose 1,6-bisphosphate metabolic process"/>
    <property type="evidence" value="ECO:0007669"/>
    <property type="project" value="TreeGrafter"/>
</dbReference>
<dbReference type="GO" id="GO:0006002">
    <property type="term" value="P:fructose 6-phosphate metabolic process"/>
    <property type="evidence" value="ECO:0007669"/>
    <property type="project" value="TreeGrafter"/>
</dbReference>
<dbReference type="GO" id="GO:0006000">
    <property type="term" value="P:fructose metabolic process"/>
    <property type="evidence" value="ECO:0007669"/>
    <property type="project" value="TreeGrafter"/>
</dbReference>
<dbReference type="GO" id="GO:0006094">
    <property type="term" value="P:gluconeogenesis"/>
    <property type="evidence" value="ECO:0007669"/>
    <property type="project" value="UniProtKB-UniRule"/>
</dbReference>
<dbReference type="GO" id="GO:0019253">
    <property type="term" value="P:reductive pentose-phosphate cycle"/>
    <property type="evidence" value="ECO:0007669"/>
    <property type="project" value="UniProtKB-UniRule"/>
</dbReference>
<dbReference type="GO" id="GO:0005986">
    <property type="term" value="P:sucrose biosynthetic process"/>
    <property type="evidence" value="ECO:0007669"/>
    <property type="project" value="TreeGrafter"/>
</dbReference>
<dbReference type="CDD" id="cd00354">
    <property type="entry name" value="FBPase"/>
    <property type="match status" value="1"/>
</dbReference>
<dbReference type="FunFam" id="3.40.190.80:FF:000011">
    <property type="entry name" value="Fructose-1,6-bisphosphatase class 1"/>
    <property type="match status" value="1"/>
</dbReference>
<dbReference type="Gene3D" id="3.40.190.80">
    <property type="match status" value="1"/>
</dbReference>
<dbReference type="Gene3D" id="3.30.540.10">
    <property type="entry name" value="Fructose-1,6-Bisphosphatase, subunit A, domain 1"/>
    <property type="match status" value="1"/>
</dbReference>
<dbReference type="HAMAP" id="MF_01855">
    <property type="entry name" value="FBPase_class1"/>
    <property type="match status" value="1"/>
</dbReference>
<dbReference type="InterPro" id="IPR044015">
    <property type="entry name" value="FBPase_C_dom"/>
</dbReference>
<dbReference type="InterPro" id="IPR000146">
    <property type="entry name" value="FBPase_class-1"/>
</dbReference>
<dbReference type="InterPro" id="IPR033391">
    <property type="entry name" value="FBPase_N"/>
</dbReference>
<dbReference type="InterPro" id="IPR028343">
    <property type="entry name" value="FBPtase"/>
</dbReference>
<dbReference type="InterPro" id="IPR020548">
    <property type="entry name" value="Fructose_bisphosphatase_AS"/>
</dbReference>
<dbReference type="NCBIfam" id="NF006779">
    <property type="entry name" value="PRK09293.1-3"/>
    <property type="match status" value="1"/>
</dbReference>
<dbReference type="NCBIfam" id="NF006780">
    <property type="entry name" value="PRK09293.1-4"/>
    <property type="match status" value="1"/>
</dbReference>
<dbReference type="PANTHER" id="PTHR11556">
    <property type="entry name" value="FRUCTOSE-1,6-BISPHOSPHATASE-RELATED"/>
    <property type="match status" value="1"/>
</dbReference>
<dbReference type="PANTHER" id="PTHR11556:SF35">
    <property type="entry name" value="SEDOHEPTULOSE-1,7-BISPHOSPHATASE, CHLOROPLASTIC"/>
    <property type="match status" value="1"/>
</dbReference>
<dbReference type="Pfam" id="PF00316">
    <property type="entry name" value="FBPase"/>
    <property type="match status" value="1"/>
</dbReference>
<dbReference type="Pfam" id="PF18913">
    <property type="entry name" value="FBPase_C"/>
    <property type="match status" value="1"/>
</dbReference>
<dbReference type="PIRSF" id="PIRSF500210">
    <property type="entry name" value="FBPtase"/>
    <property type="match status" value="1"/>
</dbReference>
<dbReference type="PIRSF" id="PIRSF000904">
    <property type="entry name" value="FBPtase_SBPase"/>
    <property type="match status" value="1"/>
</dbReference>
<dbReference type="PRINTS" id="PR00115">
    <property type="entry name" value="F16BPHPHTASE"/>
</dbReference>
<dbReference type="SUPFAM" id="SSF56655">
    <property type="entry name" value="Carbohydrate phosphatase"/>
    <property type="match status" value="1"/>
</dbReference>
<dbReference type="PROSITE" id="PS00124">
    <property type="entry name" value="FBPASE"/>
    <property type="match status" value="1"/>
</dbReference>
<gene>
    <name evidence="1" type="primary">fbp1</name>
    <name type="ordered locus">BBta_0445</name>
</gene>
<sequence length="338" mass="36736">MTAPEGTLESFLEGDCSVSEPLAITVTALAFVAETLAGVISSGPLNGRLGEEVGANSDGDRQKKLDVVADELFAGALAPTPVRWYASEERPTAEMLNPEGTLALAIDPLDGSSNIDVNISIGTIFSVFEAKESGVESFLRPGREQIAAGYVVYGPQTVFILATRTTLAQFVLHRGHFFLVSDSLRIPDRTTEFAINASNYRHWSRPIRAFVDDCIAGDEGPWGENFNMRWVASLVAETHRILTRGGIFLYPADARRGYGQGRLRLVYECAPIAFIVERAGGKATDGIDRILDLTPSELHQRTPLVFGTAEKVSQVCAYHDLPESEVSPLFGTRGLFRA</sequence>
<reference key="1">
    <citation type="journal article" date="2007" name="Science">
        <title>Legumes symbioses: absence of nod genes in photosynthetic bradyrhizobia.</title>
        <authorList>
            <person name="Giraud E."/>
            <person name="Moulin L."/>
            <person name="Vallenet D."/>
            <person name="Barbe V."/>
            <person name="Cytryn E."/>
            <person name="Avarre J.-C."/>
            <person name="Jaubert M."/>
            <person name="Simon D."/>
            <person name="Cartieaux F."/>
            <person name="Prin Y."/>
            <person name="Bena G."/>
            <person name="Hannibal L."/>
            <person name="Fardoux J."/>
            <person name="Kojadinovic M."/>
            <person name="Vuillet L."/>
            <person name="Lajus A."/>
            <person name="Cruveiller S."/>
            <person name="Rouy Z."/>
            <person name="Mangenot S."/>
            <person name="Segurens B."/>
            <person name="Dossat C."/>
            <person name="Franck W.L."/>
            <person name="Chang W.-S."/>
            <person name="Saunders E."/>
            <person name="Bruce D."/>
            <person name="Richardson P."/>
            <person name="Normand P."/>
            <person name="Dreyfus B."/>
            <person name="Pignol D."/>
            <person name="Stacey G."/>
            <person name="Emerich D."/>
            <person name="Vermeglio A."/>
            <person name="Medigue C."/>
            <person name="Sadowsky M."/>
        </authorList>
    </citation>
    <scope>NUCLEOTIDE SEQUENCE [LARGE SCALE GENOMIC DNA]</scope>
    <source>
        <strain>BTAi1 / ATCC BAA-1182</strain>
    </source>
</reference>
<name>F16A1_BRASB</name>
<keyword id="KW-0113">Calvin cycle</keyword>
<keyword id="KW-0119">Carbohydrate metabolism</keyword>
<keyword id="KW-0963">Cytoplasm</keyword>
<keyword id="KW-0378">Hydrolase</keyword>
<keyword id="KW-0460">Magnesium</keyword>
<keyword id="KW-0479">Metal-binding</keyword>
<keyword id="KW-1185">Reference proteome</keyword>
<proteinExistence type="inferred from homology"/>
<accession>A5E987</accession>
<evidence type="ECO:0000255" key="1">
    <source>
        <dbReference type="HAMAP-Rule" id="MF_01855"/>
    </source>
</evidence>
<feature type="chain" id="PRO_0000364473" description="Fructose-1,6-bisphosphatase class 1 1">
    <location>
        <begin position="1"/>
        <end position="338"/>
    </location>
</feature>
<feature type="binding site" evidence="1">
    <location>
        <position position="88"/>
    </location>
    <ligand>
        <name>Mg(2+)</name>
        <dbReference type="ChEBI" id="CHEBI:18420"/>
        <label>1</label>
    </ligand>
</feature>
<feature type="binding site" evidence="1">
    <location>
        <position position="107"/>
    </location>
    <ligand>
        <name>Mg(2+)</name>
        <dbReference type="ChEBI" id="CHEBI:18420"/>
        <label>1</label>
    </ligand>
</feature>
<feature type="binding site" evidence="1">
    <location>
        <position position="107"/>
    </location>
    <ligand>
        <name>Mg(2+)</name>
        <dbReference type="ChEBI" id="CHEBI:18420"/>
        <label>2</label>
    </ligand>
</feature>
<feature type="binding site" evidence="1">
    <location>
        <position position="109"/>
    </location>
    <ligand>
        <name>Mg(2+)</name>
        <dbReference type="ChEBI" id="CHEBI:18420"/>
        <label>1</label>
    </ligand>
</feature>
<feature type="binding site" evidence="1">
    <location>
        <begin position="110"/>
        <end position="113"/>
    </location>
    <ligand>
        <name>substrate</name>
    </ligand>
</feature>
<feature type="binding site" evidence="1">
    <location>
        <position position="110"/>
    </location>
    <ligand>
        <name>Mg(2+)</name>
        <dbReference type="ChEBI" id="CHEBI:18420"/>
        <label>2</label>
    </ligand>
</feature>
<feature type="binding site" evidence="1">
    <location>
        <position position="196"/>
    </location>
    <ligand>
        <name>substrate</name>
    </ligand>
</feature>
<feature type="binding site" evidence="1">
    <location>
        <position position="268"/>
    </location>
    <ligand>
        <name>Mg(2+)</name>
        <dbReference type="ChEBI" id="CHEBI:18420"/>
        <label>2</label>
    </ligand>
</feature>